<sequence length="89" mass="9774">MATVIAKVKVMPTSPEVEKEALKETLKELVENNDAKCRGVSDEPLAFGLYTVFVMVEMEEKEGGMDPIEEAMNALENVESAEVVELSLV</sequence>
<keyword id="KW-0251">Elongation factor</keyword>
<keyword id="KW-0648">Protein biosynthesis</keyword>
<organism>
    <name type="scientific">Methanococcus maripaludis (strain C5 / ATCC BAA-1333)</name>
    <dbReference type="NCBI Taxonomy" id="402880"/>
    <lineage>
        <taxon>Archaea</taxon>
        <taxon>Methanobacteriati</taxon>
        <taxon>Methanobacteriota</taxon>
        <taxon>Methanomada group</taxon>
        <taxon>Methanococci</taxon>
        <taxon>Methanococcales</taxon>
        <taxon>Methanococcaceae</taxon>
        <taxon>Methanococcus</taxon>
    </lineage>
</organism>
<evidence type="ECO:0000255" key="1">
    <source>
        <dbReference type="HAMAP-Rule" id="MF_00043"/>
    </source>
</evidence>
<protein>
    <recommendedName>
        <fullName evidence="1">Elongation factor 1-beta</fullName>
        <shortName evidence="1">EF-1-beta</shortName>
    </recommendedName>
    <alternativeName>
        <fullName evidence="1">aEF-1beta</fullName>
    </alternativeName>
</protein>
<proteinExistence type="inferred from homology"/>
<name>EF1B_METM5</name>
<feature type="chain" id="PRO_0000366427" description="Elongation factor 1-beta">
    <location>
        <begin position="1"/>
        <end position="89"/>
    </location>
</feature>
<reference key="1">
    <citation type="submission" date="2007-03" db="EMBL/GenBank/DDBJ databases">
        <title>Complete sequence of chromosome of Methanococcus maripaludis C5.</title>
        <authorList>
            <consortium name="US DOE Joint Genome Institute"/>
            <person name="Copeland A."/>
            <person name="Lucas S."/>
            <person name="Lapidus A."/>
            <person name="Barry K."/>
            <person name="Glavina del Rio T."/>
            <person name="Dalin E."/>
            <person name="Tice H."/>
            <person name="Pitluck S."/>
            <person name="Chertkov O."/>
            <person name="Brettin T."/>
            <person name="Bruce D."/>
            <person name="Han C."/>
            <person name="Detter J.C."/>
            <person name="Schmutz J."/>
            <person name="Larimer F."/>
            <person name="Land M."/>
            <person name="Hauser L."/>
            <person name="Kyrpides N."/>
            <person name="Mikhailova N."/>
            <person name="Sieprawska-Lupa M."/>
            <person name="Whitman W.B."/>
            <person name="Richardson P."/>
        </authorList>
    </citation>
    <scope>NUCLEOTIDE SEQUENCE [LARGE SCALE GENOMIC DNA]</scope>
    <source>
        <strain>C5 / ATCC BAA-1333</strain>
    </source>
</reference>
<dbReference type="EMBL" id="CP000609">
    <property type="protein sequence ID" value="ABO34494.1"/>
    <property type="molecule type" value="Genomic_DNA"/>
</dbReference>
<dbReference type="RefSeq" id="WP_011867952.1">
    <property type="nucleotide sequence ID" value="NC_009135.1"/>
</dbReference>
<dbReference type="SMR" id="A4FWB9"/>
<dbReference type="STRING" id="402880.MmarC5_0177"/>
<dbReference type="GeneID" id="4927933"/>
<dbReference type="KEGG" id="mmq:MmarC5_0177"/>
<dbReference type="eggNOG" id="arCOG01988">
    <property type="taxonomic scope" value="Archaea"/>
</dbReference>
<dbReference type="HOGENOM" id="CLU_165896_0_0_2"/>
<dbReference type="Proteomes" id="UP000000253">
    <property type="component" value="Chromosome"/>
</dbReference>
<dbReference type="GO" id="GO:0003746">
    <property type="term" value="F:translation elongation factor activity"/>
    <property type="evidence" value="ECO:0007669"/>
    <property type="project" value="UniProtKB-UniRule"/>
</dbReference>
<dbReference type="Gene3D" id="3.30.70.60">
    <property type="match status" value="1"/>
</dbReference>
<dbReference type="HAMAP" id="MF_00043">
    <property type="entry name" value="EF1_beta"/>
    <property type="match status" value="1"/>
</dbReference>
<dbReference type="InterPro" id="IPR036219">
    <property type="entry name" value="eEF-1beta-like_sf"/>
</dbReference>
<dbReference type="InterPro" id="IPR014038">
    <property type="entry name" value="EF1B_bsu/dsu_GNE"/>
</dbReference>
<dbReference type="InterPro" id="IPR014717">
    <property type="entry name" value="Transl_elong_EF1B/ribsomal_bS6"/>
</dbReference>
<dbReference type="InterPro" id="IPR004542">
    <property type="entry name" value="Transl_elong_EF1B_B_arc"/>
</dbReference>
<dbReference type="NCBIfam" id="TIGR00489">
    <property type="entry name" value="aEF-1_beta"/>
    <property type="match status" value="1"/>
</dbReference>
<dbReference type="NCBIfam" id="NF001670">
    <property type="entry name" value="PRK00435.1"/>
    <property type="match status" value="1"/>
</dbReference>
<dbReference type="PANTHER" id="PTHR39647">
    <property type="entry name" value="ELONGATION FACTOR 1-BETA"/>
    <property type="match status" value="1"/>
</dbReference>
<dbReference type="PANTHER" id="PTHR39647:SF1">
    <property type="entry name" value="ELONGATION FACTOR 1-BETA"/>
    <property type="match status" value="1"/>
</dbReference>
<dbReference type="Pfam" id="PF00736">
    <property type="entry name" value="EF1_GNE"/>
    <property type="match status" value="1"/>
</dbReference>
<dbReference type="SMART" id="SM00888">
    <property type="entry name" value="EF1_GNE"/>
    <property type="match status" value="1"/>
</dbReference>
<dbReference type="SUPFAM" id="SSF54984">
    <property type="entry name" value="eEF-1beta-like"/>
    <property type="match status" value="1"/>
</dbReference>
<accession>A4FWB9</accession>
<comment type="function">
    <text evidence="1">Promotes the exchange of GDP for GTP in EF-1-alpha/GDP, thus allowing the regeneration of EF-1-alpha/GTP that could then be used to form the ternary complex EF-1-alpha/GTP/AAtRNA.</text>
</comment>
<comment type="similarity">
    <text evidence="1">Belongs to the EF-1-beta/EF-1-delta family.</text>
</comment>
<gene>
    <name evidence="1" type="primary">ef1b</name>
    <name type="ordered locus">MmarC5_0177</name>
</gene>